<keyword id="KW-0119">Carbohydrate metabolism</keyword>
<keyword id="KW-0963">Cytoplasm</keyword>
<keyword id="KW-0413">Isomerase</keyword>
<keyword id="KW-0479">Metal-binding</keyword>
<keyword id="KW-1185">Reference proteome</keyword>
<keyword id="KW-0862">Zinc</keyword>
<accession>B1WYG5</accession>
<dbReference type="EC" id="5.3.1.28" evidence="1"/>
<dbReference type="EMBL" id="CP000806">
    <property type="protein sequence ID" value="ACB49395.1"/>
    <property type="molecule type" value="Genomic_DNA"/>
</dbReference>
<dbReference type="RefSeq" id="WP_009543154.1">
    <property type="nucleotide sequence ID" value="NC_010546.1"/>
</dbReference>
<dbReference type="SMR" id="B1WYG5"/>
<dbReference type="STRING" id="43989.cce_0043"/>
<dbReference type="KEGG" id="cyt:cce_0043"/>
<dbReference type="eggNOG" id="COG0279">
    <property type="taxonomic scope" value="Bacteria"/>
</dbReference>
<dbReference type="HOGENOM" id="CLU_080999_4_0_3"/>
<dbReference type="OrthoDB" id="7847955at2"/>
<dbReference type="UniPathway" id="UPA00041">
    <property type="reaction ID" value="UER00436"/>
</dbReference>
<dbReference type="Proteomes" id="UP000001203">
    <property type="component" value="Chromosome circular"/>
</dbReference>
<dbReference type="GO" id="GO:0005737">
    <property type="term" value="C:cytoplasm"/>
    <property type="evidence" value="ECO:0007669"/>
    <property type="project" value="UniProtKB-SubCell"/>
</dbReference>
<dbReference type="GO" id="GO:0097367">
    <property type="term" value="F:carbohydrate derivative binding"/>
    <property type="evidence" value="ECO:0007669"/>
    <property type="project" value="InterPro"/>
</dbReference>
<dbReference type="GO" id="GO:0008968">
    <property type="term" value="F:D-sedoheptulose 7-phosphate isomerase activity"/>
    <property type="evidence" value="ECO:0007669"/>
    <property type="project" value="UniProtKB-UniRule"/>
</dbReference>
<dbReference type="GO" id="GO:0008270">
    <property type="term" value="F:zinc ion binding"/>
    <property type="evidence" value="ECO:0007669"/>
    <property type="project" value="UniProtKB-UniRule"/>
</dbReference>
<dbReference type="GO" id="GO:0005975">
    <property type="term" value="P:carbohydrate metabolic process"/>
    <property type="evidence" value="ECO:0007669"/>
    <property type="project" value="UniProtKB-UniRule"/>
</dbReference>
<dbReference type="GO" id="GO:2001061">
    <property type="term" value="P:D-glycero-D-manno-heptose 7-phosphate biosynthetic process"/>
    <property type="evidence" value="ECO:0007669"/>
    <property type="project" value="UniProtKB-UniPathway"/>
</dbReference>
<dbReference type="CDD" id="cd05006">
    <property type="entry name" value="SIS_GmhA"/>
    <property type="match status" value="1"/>
</dbReference>
<dbReference type="Gene3D" id="3.40.50.10490">
    <property type="entry name" value="Glucose-6-phosphate isomerase like protein, domain 1"/>
    <property type="match status" value="1"/>
</dbReference>
<dbReference type="HAMAP" id="MF_00067">
    <property type="entry name" value="GmhA"/>
    <property type="match status" value="1"/>
</dbReference>
<dbReference type="InterPro" id="IPR035461">
    <property type="entry name" value="GmhA/DiaA"/>
</dbReference>
<dbReference type="InterPro" id="IPR004515">
    <property type="entry name" value="Phosphoheptose_Isoase"/>
</dbReference>
<dbReference type="InterPro" id="IPR001347">
    <property type="entry name" value="SIS_dom"/>
</dbReference>
<dbReference type="InterPro" id="IPR046348">
    <property type="entry name" value="SIS_dom_sf"/>
</dbReference>
<dbReference type="InterPro" id="IPR050099">
    <property type="entry name" value="SIS_GmhA/DiaA_subfam"/>
</dbReference>
<dbReference type="NCBIfam" id="TIGR00441">
    <property type="entry name" value="gmhA"/>
    <property type="match status" value="1"/>
</dbReference>
<dbReference type="PANTHER" id="PTHR30390:SF6">
    <property type="entry name" value="DNAA INITIATOR-ASSOCIATING PROTEIN DIAA"/>
    <property type="match status" value="1"/>
</dbReference>
<dbReference type="PANTHER" id="PTHR30390">
    <property type="entry name" value="SEDOHEPTULOSE 7-PHOSPHATE ISOMERASE / DNAA INITIATOR-ASSOCIATING FACTOR FOR REPLICATION INITIATION"/>
    <property type="match status" value="1"/>
</dbReference>
<dbReference type="Pfam" id="PF13580">
    <property type="entry name" value="SIS_2"/>
    <property type="match status" value="1"/>
</dbReference>
<dbReference type="SUPFAM" id="SSF53697">
    <property type="entry name" value="SIS domain"/>
    <property type="match status" value="1"/>
</dbReference>
<dbReference type="PROSITE" id="PS51464">
    <property type="entry name" value="SIS"/>
    <property type="match status" value="1"/>
</dbReference>
<proteinExistence type="inferred from homology"/>
<name>GMHA_CROS5</name>
<reference key="1">
    <citation type="journal article" date="2008" name="Proc. Natl. Acad. Sci. U.S.A.">
        <title>The genome of Cyanothece 51142, a unicellular diazotrophic cyanobacterium important in the marine nitrogen cycle.</title>
        <authorList>
            <person name="Welsh E.A."/>
            <person name="Liberton M."/>
            <person name="Stoeckel J."/>
            <person name="Loh T."/>
            <person name="Elvitigala T."/>
            <person name="Wang C."/>
            <person name="Wollam A."/>
            <person name="Fulton R.S."/>
            <person name="Clifton S.W."/>
            <person name="Jacobs J.M."/>
            <person name="Aurora R."/>
            <person name="Ghosh B.K."/>
            <person name="Sherman L.A."/>
            <person name="Smith R.D."/>
            <person name="Wilson R.K."/>
            <person name="Pakrasi H.B."/>
        </authorList>
    </citation>
    <scope>NUCLEOTIDE SEQUENCE [LARGE SCALE GENOMIC DNA]</scope>
    <source>
        <strain>ATCC 51142 / BH68</strain>
    </source>
</reference>
<sequence length="196" mass="21641">MNYWIQHRLNCLEQAFNPKYCRALEHTIGIVARQFKAGNKLLICGNGGSAADAQHIAAEFVGRFQLHRKGLPAIALGTNPATLTAWSNDYEFETVFARQVEAFAQPGDILWGISTSGKSANVIRAMEMAKDLGLLTIGMAGNNGGMLKDLTDYPLFVSEYHTPYIQEIHLITYHRICEQVEAQLFAKAGLEAQIAV</sequence>
<organism>
    <name type="scientific">Crocosphaera subtropica (strain ATCC 51142 / BH68)</name>
    <name type="common">Cyanothece sp. (strain ATCC 51142)</name>
    <dbReference type="NCBI Taxonomy" id="43989"/>
    <lineage>
        <taxon>Bacteria</taxon>
        <taxon>Bacillati</taxon>
        <taxon>Cyanobacteriota</taxon>
        <taxon>Cyanophyceae</taxon>
        <taxon>Oscillatoriophycideae</taxon>
        <taxon>Chroococcales</taxon>
        <taxon>Aphanothecaceae</taxon>
        <taxon>Crocosphaera</taxon>
        <taxon>Crocosphaera subtropica</taxon>
    </lineage>
</organism>
<feature type="chain" id="PRO_1000092269" description="Phosphoheptose isomerase">
    <location>
        <begin position="1"/>
        <end position="196"/>
    </location>
</feature>
<feature type="domain" description="SIS" evidence="1">
    <location>
        <begin position="31"/>
        <end position="196"/>
    </location>
</feature>
<feature type="binding site" evidence="1">
    <location>
        <begin position="46"/>
        <end position="48"/>
    </location>
    <ligand>
        <name>substrate</name>
    </ligand>
</feature>
<feature type="binding site" evidence="1">
    <location>
        <position position="55"/>
    </location>
    <ligand>
        <name>Zn(2+)</name>
        <dbReference type="ChEBI" id="CHEBI:29105"/>
    </ligand>
</feature>
<feature type="binding site" evidence="1">
    <location>
        <position position="59"/>
    </location>
    <ligand>
        <name>substrate</name>
    </ligand>
</feature>
<feature type="binding site" evidence="1">
    <location>
        <position position="59"/>
    </location>
    <ligand>
        <name>Zn(2+)</name>
        <dbReference type="ChEBI" id="CHEBI:29105"/>
    </ligand>
</feature>
<feature type="binding site" evidence="1">
    <location>
        <begin position="88"/>
        <end position="89"/>
    </location>
    <ligand>
        <name>substrate</name>
    </ligand>
</feature>
<feature type="binding site" evidence="1">
    <location>
        <begin position="114"/>
        <end position="116"/>
    </location>
    <ligand>
        <name>substrate</name>
    </ligand>
</feature>
<feature type="binding site" evidence="1">
    <location>
        <position position="119"/>
    </location>
    <ligand>
        <name>substrate</name>
    </ligand>
</feature>
<feature type="binding site" evidence="1">
    <location>
        <position position="166"/>
    </location>
    <ligand>
        <name>substrate</name>
    </ligand>
</feature>
<feature type="binding site" evidence="1">
    <location>
        <position position="166"/>
    </location>
    <ligand>
        <name>Zn(2+)</name>
        <dbReference type="ChEBI" id="CHEBI:29105"/>
    </ligand>
</feature>
<feature type="binding site" evidence="1">
    <location>
        <position position="174"/>
    </location>
    <ligand>
        <name>Zn(2+)</name>
        <dbReference type="ChEBI" id="CHEBI:29105"/>
    </ligand>
</feature>
<gene>
    <name evidence="1" type="primary">gmhA</name>
    <name type="ordered locus">cce_0043</name>
</gene>
<evidence type="ECO:0000255" key="1">
    <source>
        <dbReference type="HAMAP-Rule" id="MF_00067"/>
    </source>
</evidence>
<comment type="function">
    <text evidence="1">Catalyzes the isomerization of sedoheptulose 7-phosphate in D-glycero-D-manno-heptose 7-phosphate.</text>
</comment>
<comment type="catalytic activity">
    <reaction evidence="1">
        <text>2 D-sedoheptulose 7-phosphate = D-glycero-alpha-D-manno-heptose 7-phosphate + D-glycero-beta-D-manno-heptose 7-phosphate</text>
        <dbReference type="Rhea" id="RHEA:27489"/>
        <dbReference type="ChEBI" id="CHEBI:57483"/>
        <dbReference type="ChEBI" id="CHEBI:60203"/>
        <dbReference type="ChEBI" id="CHEBI:60204"/>
        <dbReference type="EC" id="5.3.1.28"/>
    </reaction>
</comment>
<comment type="cofactor">
    <cofactor evidence="1">
        <name>Zn(2+)</name>
        <dbReference type="ChEBI" id="CHEBI:29105"/>
    </cofactor>
    <text evidence="1">Binds 1 zinc ion per subunit.</text>
</comment>
<comment type="pathway">
    <text evidence="1">Carbohydrate biosynthesis; D-glycero-D-manno-heptose 7-phosphate biosynthesis; D-glycero-alpha-D-manno-heptose 7-phosphate and D-glycero-beta-D-manno-heptose 7-phosphate from sedoheptulose 7-phosphate: step 1/1.</text>
</comment>
<comment type="subcellular location">
    <subcellularLocation>
        <location evidence="1">Cytoplasm</location>
    </subcellularLocation>
</comment>
<comment type="miscellaneous">
    <text evidence="1">The reaction produces a racemic mixture of D-glycero-alpha-D-manno-heptose 7-phosphate and D-glycero-beta-D-manno-heptose 7-phosphate.</text>
</comment>
<comment type="similarity">
    <text evidence="1">Belongs to the SIS family. GmhA subfamily.</text>
</comment>
<protein>
    <recommendedName>
        <fullName evidence="1">Phosphoheptose isomerase</fullName>
        <ecNumber evidence="1">5.3.1.28</ecNumber>
    </recommendedName>
    <alternativeName>
        <fullName evidence="1">Sedoheptulose 7-phosphate isomerase</fullName>
    </alternativeName>
</protein>